<comment type="function">
    <text evidence="1 6">Protein phosphatase which antagonizes mitotic cyclin-dependent kinase nimX, the inactivation of which is essential for exit from mitosis. To access its substrates, is released from nucleolar sequestration during mitosis. Plays an essential in coordinating the nuclear division cycle with cytokinesis through the cytokinesis checkpoint. Involved in chromosome segregation, where it is required for meiosis I spindle dissambly as well as for establishing two consecutive chromosome segregation phases (By similarity). Required for the transcription of the two major endoglucanase genes eglA and eglB and growth on synthetic cellulose as the sole carbon source.</text>
</comment>
<comment type="catalytic activity">
    <reaction evidence="3">
        <text>O-phospho-L-tyrosyl-[protein] + H2O = L-tyrosyl-[protein] + phosphate</text>
        <dbReference type="Rhea" id="RHEA:10684"/>
        <dbReference type="Rhea" id="RHEA-COMP:10136"/>
        <dbReference type="Rhea" id="RHEA-COMP:20101"/>
        <dbReference type="ChEBI" id="CHEBI:15377"/>
        <dbReference type="ChEBI" id="CHEBI:43474"/>
        <dbReference type="ChEBI" id="CHEBI:46858"/>
        <dbReference type="ChEBI" id="CHEBI:61978"/>
        <dbReference type="EC" id="3.1.3.48"/>
    </reaction>
</comment>
<comment type="subcellular location">
    <subcellularLocation>
        <location evidence="5">Nucleus</location>
    </subcellularLocation>
    <subcellularLocation>
        <location evidence="5">Cytoplasm</location>
    </subcellularLocation>
    <subcellularLocation>
        <location evidence="5">Cell septum</location>
    </subcellularLocation>
    <text>Does not localize to the nucleolus as its homologs do in S.cerevisiae and S.pombe. Accumulates within nuclei as they pass through interphase, displays a complex localization in mitosis, and localizes to the forming septum after mitosis is completed.</text>
</comment>
<comment type="similarity">
    <text evidence="7">Belongs to the protein-tyrosine phosphatase family. Non-receptor class CDC14 subfamily.</text>
</comment>
<accession>Q5B323</accession>
<accession>C8V824</accession>
<sequence length="595" mass="66129">MAGSTAGYGQIIEYIQDKLYLASYDHTPDAKTPFPYPAEQPKSPSKRRAQASPSKKRSPVYFTVDDTLLYNSFHADFGPLHIGHLYRFAVHFHDLLAANNDRAIVFYSRTDARSRANAACLVACYMVLIQSWPPHLALAPIAQADPPYMPFRDAGYSQADFILNIQDVVYGVWKAKEQGVCGLRDFSLEEYEKFERVDMGDFNWISPHFLAFASPQHQPVAPIPRDSPEYAALPSTVSEVRSSRLPLPFKNVLEHFATRGVGLVVRLNSELYSPSYFTALGISHIDMIFEDGTCPPLPLVKKFIRMAHEMINVKHKAIAVHCKAGLGRTGCLIGAYLIYRYGFTANEVIAFMRFMRPGMVVGPQQHWLHLNQGSFREWWFEDCMKEKLAQMQPNPVTPGRSPAKHRAAAVTTPPQNGHSKRSALGEIDNNEATPIYDDNLPAPTPGQPRKSHRKDSRHHPYSRTASGSLVVDKDTRKTRRSTDSSESEEETQLRMLAKQRSSKSPAASPGQRSISYSATVTASYTLNDDIHEDRENWGGAAQPPKTPVTSKTSGAVSVSKVRSSSRRVTGESKGVRKPSGRIGSTGSPVRVKAQA</sequence>
<protein>
    <recommendedName>
        <fullName>Tyrosine-protein phosphatase cdcA</fullName>
        <ecNumber>3.1.3.48</ecNumber>
    </recommendedName>
</protein>
<dbReference type="EC" id="3.1.3.48"/>
<dbReference type="EMBL" id="BN001303">
    <property type="protein sequence ID" value="CBF76183.1"/>
    <property type="molecule type" value="Genomic_DNA"/>
</dbReference>
<dbReference type="EMBL" id="AACD01000085">
    <property type="protein sequence ID" value="EAA60051.1"/>
    <property type="molecule type" value="Genomic_DNA"/>
</dbReference>
<dbReference type="RefSeq" id="XP_662661.1">
    <property type="nucleotide sequence ID" value="XM_657569.1"/>
</dbReference>
<dbReference type="SMR" id="Q5B323"/>
<dbReference type="FunCoup" id="Q5B323">
    <property type="interactions" value="668"/>
</dbReference>
<dbReference type="STRING" id="227321.Q5B323"/>
<dbReference type="EnsemblFungi" id="CBF76183">
    <property type="protein sequence ID" value="CBF76183"/>
    <property type="gene ID" value="ANIA_05057"/>
</dbReference>
<dbReference type="KEGG" id="ani:ANIA_05057"/>
<dbReference type="eggNOG" id="KOG1720">
    <property type="taxonomic scope" value="Eukaryota"/>
</dbReference>
<dbReference type="HOGENOM" id="CLU_017787_1_1_1"/>
<dbReference type="InParanoid" id="Q5B323"/>
<dbReference type="OMA" id="KFERVDM"/>
<dbReference type="OrthoDB" id="5632at2759"/>
<dbReference type="Proteomes" id="UP000000560">
    <property type="component" value="Chromosome III"/>
</dbReference>
<dbReference type="GO" id="GO:0030428">
    <property type="term" value="C:cell septum"/>
    <property type="evidence" value="ECO:0007669"/>
    <property type="project" value="UniProtKB-SubCell"/>
</dbReference>
<dbReference type="GO" id="GO:0005935">
    <property type="term" value="C:cellular bud neck"/>
    <property type="evidence" value="ECO:0007669"/>
    <property type="project" value="EnsemblFungi"/>
</dbReference>
<dbReference type="GO" id="GO:0005737">
    <property type="term" value="C:cytoplasm"/>
    <property type="evidence" value="ECO:0000318"/>
    <property type="project" value="GO_Central"/>
</dbReference>
<dbReference type="GO" id="GO:0000776">
    <property type="term" value="C:kinetochore"/>
    <property type="evidence" value="ECO:0007669"/>
    <property type="project" value="EnsemblFungi"/>
</dbReference>
<dbReference type="GO" id="GO:0120105">
    <property type="term" value="C:mitotic actomyosin contractile ring, intermediate layer"/>
    <property type="evidence" value="ECO:0007669"/>
    <property type="project" value="EnsemblFungi"/>
</dbReference>
<dbReference type="GO" id="GO:0072686">
    <property type="term" value="C:mitotic spindle"/>
    <property type="evidence" value="ECO:0000318"/>
    <property type="project" value="GO_Central"/>
</dbReference>
<dbReference type="GO" id="GO:1990023">
    <property type="term" value="C:mitotic spindle midzone"/>
    <property type="evidence" value="ECO:0007669"/>
    <property type="project" value="EnsemblFungi"/>
</dbReference>
<dbReference type="GO" id="GO:0071958">
    <property type="term" value="C:new mitotic spindle pole body"/>
    <property type="evidence" value="ECO:0007669"/>
    <property type="project" value="EnsemblFungi"/>
</dbReference>
<dbReference type="GO" id="GO:0140602">
    <property type="term" value="C:nucleolar peripheral inclusion body"/>
    <property type="evidence" value="ECO:0007669"/>
    <property type="project" value="EnsemblFungi"/>
</dbReference>
<dbReference type="GO" id="GO:0005730">
    <property type="term" value="C:nucleolus"/>
    <property type="evidence" value="ECO:0000318"/>
    <property type="project" value="GO_Central"/>
</dbReference>
<dbReference type="GO" id="GO:0005654">
    <property type="term" value="C:nucleoplasm"/>
    <property type="evidence" value="ECO:0007669"/>
    <property type="project" value="EnsemblFungi"/>
</dbReference>
<dbReference type="GO" id="GO:0030869">
    <property type="term" value="C:RENT complex"/>
    <property type="evidence" value="ECO:0007669"/>
    <property type="project" value="EnsemblFungi"/>
</dbReference>
<dbReference type="GO" id="GO:0000922">
    <property type="term" value="C:spindle pole"/>
    <property type="evidence" value="ECO:0000318"/>
    <property type="project" value="GO_Central"/>
</dbReference>
<dbReference type="GO" id="GO:0005816">
    <property type="term" value="C:spindle pole body"/>
    <property type="evidence" value="ECO:0000318"/>
    <property type="project" value="GO_Central"/>
</dbReference>
<dbReference type="GO" id="GO:0004722">
    <property type="term" value="F:protein serine/threonine phosphatase activity"/>
    <property type="evidence" value="ECO:0000318"/>
    <property type="project" value="GO_Central"/>
</dbReference>
<dbReference type="GO" id="GO:0004725">
    <property type="term" value="F:protein tyrosine phosphatase activity"/>
    <property type="evidence" value="ECO:0000318"/>
    <property type="project" value="GO_Central"/>
</dbReference>
<dbReference type="GO" id="GO:0000422">
    <property type="term" value="P:autophagy of mitochondrion"/>
    <property type="evidence" value="ECO:0007669"/>
    <property type="project" value="EnsemblFungi"/>
</dbReference>
<dbReference type="GO" id="GO:0051301">
    <property type="term" value="P:cell division"/>
    <property type="evidence" value="ECO:0007669"/>
    <property type="project" value="UniProtKB-KW"/>
</dbReference>
<dbReference type="GO" id="GO:0071470">
    <property type="term" value="P:cellular response to osmotic stress"/>
    <property type="evidence" value="ECO:0007669"/>
    <property type="project" value="EnsemblFungi"/>
</dbReference>
<dbReference type="GO" id="GO:0006974">
    <property type="term" value="P:DNA damage response"/>
    <property type="evidence" value="ECO:0007669"/>
    <property type="project" value="EnsemblFungi"/>
</dbReference>
<dbReference type="GO" id="GO:0140013">
    <property type="term" value="P:meiotic nuclear division"/>
    <property type="evidence" value="ECO:0007669"/>
    <property type="project" value="EnsemblFungi"/>
</dbReference>
<dbReference type="GO" id="GO:0051229">
    <property type="term" value="P:meiotic spindle disassembly"/>
    <property type="evidence" value="ECO:0007669"/>
    <property type="project" value="EnsemblFungi"/>
</dbReference>
<dbReference type="GO" id="GO:0000226">
    <property type="term" value="P:microtubule cytoskeleton organization"/>
    <property type="evidence" value="ECO:0000318"/>
    <property type="project" value="GO_Central"/>
</dbReference>
<dbReference type="GO" id="GO:0044878">
    <property type="term" value="P:mitotic cytokinesis checkpoint signaling"/>
    <property type="evidence" value="ECO:0007669"/>
    <property type="project" value="EnsemblFungi"/>
</dbReference>
<dbReference type="GO" id="GO:0016479">
    <property type="term" value="P:negative regulation of transcription by RNA polymerase I"/>
    <property type="evidence" value="ECO:0007669"/>
    <property type="project" value="EnsemblFungi"/>
</dbReference>
<dbReference type="GO" id="GO:2000786">
    <property type="term" value="P:positive regulation of autophagosome assembly"/>
    <property type="evidence" value="ECO:0007669"/>
    <property type="project" value="EnsemblFungi"/>
</dbReference>
<dbReference type="GO" id="GO:0032467">
    <property type="term" value="P:positive regulation of cytokinesis"/>
    <property type="evidence" value="ECO:0000318"/>
    <property type="project" value="GO_Central"/>
</dbReference>
<dbReference type="GO" id="GO:0031536">
    <property type="term" value="P:positive regulation of exit from mitosis"/>
    <property type="evidence" value="ECO:0007669"/>
    <property type="project" value="EnsemblFungi"/>
</dbReference>
<dbReference type="GO" id="GO:1903501">
    <property type="term" value="P:positive regulation of mitotic actomyosin contractile ring assembly"/>
    <property type="evidence" value="ECO:0007669"/>
    <property type="project" value="EnsemblFungi"/>
</dbReference>
<dbReference type="GO" id="GO:0140429">
    <property type="term" value="P:positive regulation of mitotic sister chromatid biorientation"/>
    <property type="evidence" value="ECO:0007669"/>
    <property type="project" value="EnsemblFungi"/>
</dbReference>
<dbReference type="GO" id="GO:1902846">
    <property type="term" value="P:positive regulation of mitotic spindle elongation"/>
    <property type="evidence" value="ECO:0007669"/>
    <property type="project" value="EnsemblFungi"/>
</dbReference>
<dbReference type="GO" id="GO:0031031">
    <property type="term" value="P:positive regulation of septation initiation signaling"/>
    <property type="evidence" value="ECO:0007669"/>
    <property type="project" value="EnsemblFungi"/>
</dbReference>
<dbReference type="GO" id="GO:1902440">
    <property type="term" value="P:protein localization to mitotic spindle pole body"/>
    <property type="evidence" value="ECO:0007669"/>
    <property type="project" value="EnsemblFungi"/>
</dbReference>
<dbReference type="GO" id="GO:0070550">
    <property type="term" value="P:rDNA chromatin condensation"/>
    <property type="evidence" value="ECO:0007669"/>
    <property type="project" value="EnsemblFungi"/>
</dbReference>
<dbReference type="GO" id="GO:0007096">
    <property type="term" value="P:regulation of exit from mitosis"/>
    <property type="evidence" value="ECO:0000318"/>
    <property type="project" value="GO_Central"/>
</dbReference>
<dbReference type="CDD" id="cd14499">
    <property type="entry name" value="CDC14_C"/>
    <property type="match status" value="1"/>
</dbReference>
<dbReference type="CDD" id="cd17657">
    <property type="entry name" value="CDC14_N"/>
    <property type="match status" value="1"/>
</dbReference>
<dbReference type="FunFam" id="3.90.190.10:FF:000038">
    <property type="entry name" value="Tyrosine-protein phosphatase CDC14"/>
    <property type="match status" value="1"/>
</dbReference>
<dbReference type="FunFam" id="3.90.190.10:FF:000073">
    <property type="entry name" value="Tyrosine-protein phosphatase CDC14"/>
    <property type="match status" value="1"/>
</dbReference>
<dbReference type="Gene3D" id="3.90.190.10">
    <property type="entry name" value="Protein tyrosine phosphatase superfamily"/>
    <property type="match status" value="2"/>
</dbReference>
<dbReference type="InterPro" id="IPR044506">
    <property type="entry name" value="CDC14_C"/>
</dbReference>
<dbReference type="InterPro" id="IPR029260">
    <property type="entry name" value="DSPn"/>
</dbReference>
<dbReference type="InterPro" id="IPR000340">
    <property type="entry name" value="Dual-sp_phosphatase_cat-dom"/>
</dbReference>
<dbReference type="InterPro" id="IPR029021">
    <property type="entry name" value="Prot-tyrosine_phosphatase-like"/>
</dbReference>
<dbReference type="InterPro" id="IPR050561">
    <property type="entry name" value="PTP"/>
</dbReference>
<dbReference type="InterPro" id="IPR016130">
    <property type="entry name" value="Tyr_Pase_AS"/>
</dbReference>
<dbReference type="InterPro" id="IPR003595">
    <property type="entry name" value="Tyr_Pase_cat"/>
</dbReference>
<dbReference type="InterPro" id="IPR000387">
    <property type="entry name" value="Tyr_Pase_dom"/>
</dbReference>
<dbReference type="InterPro" id="IPR020422">
    <property type="entry name" value="TYR_PHOSPHATASE_DUAL_dom"/>
</dbReference>
<dbReference type="PANTHER" id="PTHR23339">
    <property type="entry name" value="TYROSINE SPECIFIC PROTEIN PHOSPHATASE AND DUAL SPECIFICITY PROTEIN PHOSPHATASE"/>
    <property type="match status" value="1"/>
</dbReference>
<dbReference type="Pfam" id="PF00782">
    <property type="entry name" value="DSPc"/>
    <property type="match status" value="1"/>
</dbReference>
<dbReference type="Pfam" id="PF14671">
    <property type="entry name" value="DSPn"/>
    <property type="match status" value="1"/>
</dbReference>
<dbReference type="SMART" id="SM00195">
    <property type="entry name" value="DSPc"/>
    <property type="match status" value="1"/>
</dbReference>
<dbReference type="SMART" id="SM00404">
    <property type="entry name" value="PTPc_motif"/>
    <property type="match status" value="1"/>
</dbReference>
<dbReference type="SUPFAM" id="SSF52799">
    <property type="entry name" value="(Phosphotyrosine protein) phosphatases II"/>
    <property type="match status" value="2"/>
</dbReference>
<dbReference type="PROSITE" id="PS00383">
    <property type="entry name" value="TYR_PHOSPHATASE_1"/>
    <property type="match status" value="1"/>
</dbReference>
<dbReference type="PROSITE" id="PS50056">
    <property type="entry name" value="TYR_PHOSPHATASE_2"/>
    <property type="match status" value="1"/>
</dbReference>
<dbReference type="PROSITE" id="PS50054">
    <property type="entry name" value="TYR_PHOSPHATASE_DUAL"/>
    <property type="match status" value="1"/>
</dbReference>
<organism>
    <name type="scientific">Emericella nidulans (strain FGSC A4 / ATCC 38163 / CBS 112.46 / NRRL 194 / M139)</name>
    <name type="common">Aspergillus nidulans</name>
    <dbReference type="NCBI Taxonomy" id="227321"/>
    <lineage>
        <taxon>Eukaryota</taxon>
        <taxon>Fungi</taxon>
        <taxon>Dikarya</taxon>
        <taxon>Ascomycota</taxon>
        <taxon>Pezizomycotina</taxon>
        <taxon>Eurotiomycetes</taxon>
        <taxon>Eurotiomycetidae</taxon>
        <taxon>Eurotiales</taxon>
        <taxon>Aspergillaceae</taxon>
        <taxon>Aspergillus</taxon>
        <taxon>Aspergillus subgen. Nidulantes</taxon>
    </lineage>
</organism>
<reference key="1">
    <citation type="journal article" date="2005" name="Nature">
        <title>Sequencing of Aspergillus nidulans and comparative analysis with A. fumigatus and A. oryzae.</title>
        <authorList>
            <person name="Galagan J.E."/>
            <person name="Calvo S.E."/>
            <person name="Cuomo C."/>
            <person name="Ma L.-J."/>
            <person name="Wortman J.R."/>
            <person name="Batzoglou S."/>
            <person name="Lee S.-I."/>
            <person name="Bastuerkmen M."/>
            <person name="Spevak C.C."/>
            <person name="Clutterbuck J."/>
            <person name="Kapitonov V."/>
            <person name="Jurka J."/>
            <person name="Scazzocchio C."/>
            <person name="Farman M.L."/>
            <person name="Butler J."/>
            <person name="Purcell S."/>
            <person name="Harris S."/>
            <person name="Braus G.H."/>
            <person name="Draht O."/>
            <person name="Busch S."/>
            <person name="D'Enfert C."/>
            <person name="Bouchier C."/>
            <person name="Goldman G.H."/>
            <person name="Bell-Pedersen D."/>
            <person name="Griffiths-Jones S."/>
            <person name="Doonan J.H."/>
            <person name="Yu J."/>
            <person name="Vienken K."/>
            <person name="Pain A."/>
            <person name="Freitag M."/>
            <person name="Selker E.U."/>
            <person name="Archer D.B."/>
            <person name="Penalva M.A."/>
            <person name="Oakley B.R."/>
            <person name="Momany M."/>
            <person name="Tanaka T."/>
            <person name="Kumagai T."/>
            <person name="Asai K."/>
            <person name="Machida M."/>
            <person name="Nierman W.C."/>
            <person name="Denning D.W."/>
            <person name="Caddick M.X."/>
            <person name="Hynes M."/>
            <person name="Paoletti M."/>
            <person name="Fischer R."/>
            <person name="Miller B.L."/>
            <person name="Dyer P.S."/>
            <person name="Sachs M.S."/>
            <person name="Osmani S.A."/>
            <person name="Birren B.W."/>
        </authorList>
    </citation>
    <scope>NUCLEOTIDE SEQUENCE [LARGE SCALE GENOMIC DNA]</scope>
    <source>
        <strain>FGSC A4 / ATCC 38163 / CBS 112.46 / NRRL 194 / M139</strain>
    </source>
</reference>
<reference key="2">
    <citation type="journal article" date="2009" name="Fungal Genet. Biol.">
        <title>The 2008 update of the Aspergillus nidulans genome annotation: a community effort.</title>
        <authorList>
            <person name="Wortman J.R."/>
            <person name="Gilsenan J.M."/>
            <person name="Joardar V."/>
            <person name="Deegan J."/>
            <person name="Clutterbuck J."/>
            <person name="Andersen M.R."/>
            <person name="Archer D."/>
            <person name="Bencina M."/>
            <person name="Braus G."/>
            <person name="Coutinho P."/>
            <person name="von Dohren H."/>
            <person name="Doonan J."/>
            <person name="Driessen A.J."/>
            <person name="Durek P."/>
            <person name="Espeso E."/>
            <person name="Fekete E."/>
            <person name="Flipphi M."/>
            <person name="Estrada C.G."/>
            <person name="Geysens S."/>
            <person name="Goldman G."/>
            <person name="de Groot P.W."/>
            <person name="Hansen K."/>
            <person name="Harris S.D."/>
            <person name="Heinekamp T."/>
            <person name="Helmstaedt K."/>
            <person name="Henrissat B."/>
            <person name="Hofmann G."/>
            <person name="Homan T."/>
            <person name="Horio T."/>
            <person name="Horiuchi H."/>
            <person name="James S."/>
            <person name="Jones M."/>
            <person name="Karaffa L."/>
            <person name="Karanyi Z."/>
            <person name="Kato M."/>
            <person name="Keller N."/>
            <person name="Kelly D.E."/>
            <person name="Kiel J.A."/>
            <person name="Kim J.M."/>
            <person name="van der Klei I.J."/>
            <person name="Klis F.M."/>
            <person name="Kovalchuk A."/>
            <person name="Krasevec N."/>
            <person name="Kubicek C.P."/>
            <person name="Liu B."/>
            <person name="Maccabe A."/>
            <person name="Meyer V."/>
            <person name="Mirabito P."/>
            <person name="Miskei M."/>
            <person name="Mos M."/>
            <person name="Mullins J."/>
            <person name="Nelson D.R."/>
            <person name="Nielsen J."/>
            <person name="Oakley B.R."/>
            <person name="Osmani S.A."/>
            <person name="Pakula T."/>
            <person name="Paszewski A."/>
            <person name="Paulsen I."/>
            <person name="Pilsyk S."/>
            <person name="Pocsi I."/>
            <person name="Punt P.J."/>
            <person name="Ram A.F."/>
            <person name="Ren Q."/>
            <person name="Robellet X."/>
            <person name="Robson G."/>
            <person name="Seiboth B."/>
            <person name="van Solingen P."/>
            <person name="Specht T."/>
            <person name="Sun J."/>
            <person name="Taheri-Talesh N."/>
            <person name="Takeshita N."/>
            <person name="Ussery D."/>
            <person name="vanKuyk P.A."/>
            <person name="Visser H."/>
            <person name="van de Vondervoort P.J."/>
            <person name="de Vries R.P."/>
            <person name="Walton J."/>
            <person name="Xiang X."/>
            <person name="Xiong Y."/>
            <person name="Zeng A.P."/>
            <person name="Brandt B.W."/>
            <person name="Cornell M.J."/>
            <person name="van den Hondel C.A."/>
            <person name="Visser J."/>
            <person name="Oliver S.G."/>
            <person name="Turner G."/>
        </authorList>
    </citation>
    <scope>GENOME REANNOTATION</scope>
    <source>
        <strain>FGSC A4 / ATCC 38163 / CBS 112.46 / NRRL 194 / M139</strain>
    </source>
</reference>
<reference key="3">
    <citation type="journal article" date="2009" name="Eukaryot. Cell">
        <title>Analysis of all protein phosphatase genes in Aspergillus nidulans identifies a new mitotic regulator, fcp1.</title>
        <authorList>
            <person name="Son S."/>
            <person name="Osmani S.A."/>
        </authorList>
    </citation>
    <scope>IDENTIFICATION</scope>
</reference>
<reference key="4">
    <citation type="journal article" date="2010" name="J. Cell Biol.">
        <title>Gamma-tubulin regulates the anaphase-promoting complex/cyclosome during interphase.</title>
        <authorList>
            <person name="Nayak T."/>
            <person name="Edgerton-Morgan H."/>
            <person name="Horio T."/>
            <person name="Xiong Y."/>
            <person name="De Souza C.P."/>
            <person name="Osmani S.A."/>
            <person name="Oakley B.R."/>
        </authorList>
    </citation>
    <scope>SUBCELLULAR LOCATION</scope>
</reference>
<reference key="5">
    <citation type="journal article" date="2013" name="Biotechnol. Biofuels">
        <title>Functional characterisation of the non-essential protein kinases and phosphatases regulating Aspergillus nidulans hydrolytic enzyme production.</title>
        <authorList>
            <person name="Brown N.A."/>
            <person name="de Gouvea P.F."/>
            <person name="Krohn N.G."/>
            <person name="Savoldi M."/>
            <person name="Goldman G.H."/>
        </authorList>
    </citation>
    <scope>FUNCTION</scope>
</reference>
<feature type="chain" id="PRO_0000425254" description="Tyrosine-protein phosphatase cdcA">
    <location>
        <begin position="1"/>
        <end position="595"/>
    </location>
</feature>
<feature type="domain" description="Tyrosine-protein phosphatase" evidence="2">
    <location>
        <begin position="233"/>
        <end position="381"/>
    </location>
</feature>
<feature type="region of interest" description="Disordered" evidence="4">
    <location>
        <begin position="32"/>
        <end position="57"/>
    </location>
</feature>
<feature type="region of interest" description="Disordered" evidence="4">
    <location>
        <begin position="392"/>
        <end position="595"/>
    </location>
</feature>
<feature type="compositionally biased region" description="Basic residues" evidence="4">
    <location>
        <begin position="44"/>
        <end position="57"/>
    </location>
</feature>
<feature type="compositionally biased region" description="Basic residues" evidence="4">
    <location>
        <begin position="449"/>
        <end position="461"/>
    </location>
</feature>
<feature type="compositionally biased region" description="Basic and acidic residues" evidence="4">
    <location>
        <begin position="471"/>
        <end position="483"/>
    </location>
</feature>
<feature type="compositionally biased region" description="Polar residues" evidence="4">
    <location>
        <begin position="502"/>
        <end position="526"/>
    </location>
</feature>
<feature type="active site" description="Phosphocysteine intermediate" evidence="2">
    <location>
        <position position="322"/>
    </location>
</feature>
<evidence type="ECO:0000250" key="1"/>
<evidence type="ECO:0000255" key="2">
    <source>
        <dbReference type="PROSITE-ProRule" id="PRU00160"/>
    </source>
</evidence>
<evidence type="ECO:0000255" key="3">
    <source>
        <dbReference type="PROSITE-ProRule" id="PRU10044"/>
    </source>
</evidence>
<evidence type="ECO:0000256" key="4">
    <source>
        <dbReference type="SAM" id="MobiDB-lite"/>
    </source>
</evidence>
<evidence type="ECO:0000269" key="5">
    <source>
    </source>
</evidence>
<evidence type="ECO:0000269" key="6">
    <source>
    </source>
</evidence>
<evidence type="ECO:0000305" key="7"/>
<name>CDC14_EMENI</name>
<proteinExistence type="inferred from homology"/>
<keyword id="KW-0131">Cell cycle</keyword>
<keyword id="KW-0132">Cell division</keyword>
<keyword id="KW-0963">Cytoplasm</keyword>
<keyword id="KW-0378">Hydrolase</keyword>
<keyword id="KW-0469">Meiosis</keyword>
<keyword id="KW-0498">Mitosis</keyword>
<keyword id="KW-0539">Nucleus</keyword>
<keyword id="KW-0597">Phosphoprotein</keyword>
<keyword id="KW-0904">Protein phosphatase</keyword>
<keyword id="KW-1185">Reference proteome</keyword>
<gene>
    <name type="primary">cdcA</name>
    <name type="ORF">AN5057</name>
</gene>